<gene>
    <name type="primary">yhiL</name>
    <name type="ordered locus">b4660</name>
    <name type="ordered locus">JW3457</name>
    <name type="ORF">b3489</name>
    <name type="ORF">b3490</name>
</gene>
<evidence type="ECO:0000256" key="1">
    <source>
        <dbReference type="SAM" id="MobiDB-lite"/>
    </source>
</evidence>
<evidence type="ECO:0000305" key="2"/>
<comment type="caution">
    <text evidence="2">Could be the product of a pseudogene. A frameshift in position 399 produces two separate ORFs.</text>
</comment>
<comment type="sequence caution" evidence="2">
    <conflict type="frameshift">
        <sequence resource="EMBL-CDS" id="AAB18465"/>
    </conflict>
</comment>
<comment type="sequence caution" evidence="2">
    <conflict type="frameshift">
        <sequence resource="EMBL-CDS" id="AAB18466"/>
    </conflict>
</comment>
<comment type="sequence caution" evidence="2">
    <conflict type="frameshift">
        <sequence resource="EMBL-CDS" id="BAE77804"/>
    </conflict>
</comment>
<comment type="sequence caution" evidence="2">
    <conflict type="frameshift">
        <sequence resource="EMBL" id="U00096"/>
    </conflict>
</comment>
<sequence>MKAIDNQIRNISSSHQDKHSDKVNSHQHHGKVDKTHRAKIVEFDKLDNDSQIDNDFGLHIIYFLQHGHWKVNDRSHQMEKVWFYNSEPSIDIQEYNRFADNTTDTFIFTIIPDNNHVLKLSSPITVTVECKGGYYFINSSGDKSDIIYKVDGLSIIARNFFTLLSGNFKPDWRWDVSKETFTKEKFDSYVKSVFSKIDFYKQCGVINPQNANTAYFGDTDGRVGAVLYALLVSGHIGIREKGWSLLCELLKHEEMASSAYKHKNNKVLYDLLNTRDMILNELHQHVFLKDDAITPCIFLGDHTGDRFSTIFGDKYILTLLNSMRNMEGNKDSRINKNVVVLAGNHEINFNGNYTARLANHKLSAGDTYNLIKTLDVCNYDSERQVLTSHHGIIRDEEKKCYCLGALQVPFNQMKNPTDPEELANIFNKKHKEHMDDPLFHLIRSNTLKPTPVYANYFDNTTDFRPARERIFICGETLKGEDPSKYIRQKYGHHGPGVDHNQQFDNGIMGLNSLKEARDKNNKIIYSSGLSCFQLH</sequence>
<accession>P37629</accession>
<accession>P37628</accession>
<accession>Q2M7F2</accession>
<dbReference type="EMBL" id="U00039">
    <property type="protein sequence ID" value="AAB18465.1"/>
    <property type="status" value="ALT_FRAME"/>
    <property type="molecule type" value="Genomic_DNA"/>
</dbReference>
<dbReference type="EMBL" id="U00039">
    <property type="protein sequence ID" value="AAB18466.1"/>
    <property type="status" value="ALT_FRAME"/>
    <property type="molecule type" value="Genomic_DNA"/>
</dbReference>
<dbReference type="EMBL" id="U00096">
    <property type="status" value="NOT_ANNOTATED_CDS"/>
    <property type="molecule type" value="Genomic_DNA"/>
</dbReference>
<dbReference type="EMBL" id="AP009048">
    <property type="protein sequence ID" value="BAE77804.1"/>
    <property type="status" value="ALT_FRAME"/>
    <property type="molecule type" value="Genomic_DNA"/>
</dbReference>
<dbReference type="PIR" id="E65146">
    <property type="entry name" value="E65146"/>
</dbReference>
<dbReference type="PIR" id="S47709">
    <property type="entry name" value="S47709"/>
</dbReference>
<dbReference type="BioGRID" id="4262516">
    <property type="interactions" value="15"/>
</dbReference>
<dbReference type="FunCoup" id="P37629">
    <property type="interactions" value="36"/>
</dbReference>
<dbReference type="IntAct" id="P37629">
    <property type="interactions" value="13"/>
</dbReference>
<dbReference type="KEGG" id="ecj:JW3457"/>
<dbReference type="EchoBASE" id="EB2139"/>
<dbReference type="HOGENOM" id="CLU_038139_1_0_6"/>
<dbReference type="InParanoid" id="P37629"/>
<dbReference type="Proteomes" id="UP000000625">
    <property type="component" value="Chromosome"/>
</dbReference>
<dbReference type="InterPro" id="IPR025123">
    <property type="entry name" value="DUF4049"/>
</dbReference>
<dbReference type="InterPro" id="IPR049206">
    <property type="entry name" value="DUF6860"/>
</dbReference>
<dbReference type="InterPro" id="IPR029052">
    <property type="entry name" value="Metallo-depent_PP-like"/>
</dbReference>
<dbReference type="Pfam" id="PF13258">
    <property type="entry name" value="DUF4049"/>
    <property type="match status" value="1"/>
</dbReference>
<dbReference type="Pfam" id="PF21661">
    <property type="entry name" value="DUF6860"/>
    <property type="match status" value="1"/>
</dbReference>
<dbReference type="SUPFAM" id="SSF56300">
    <property type="entry name" value="Metallo-dependent phosphatases"/>
    <property type="match status" value="1"/>
</dbReference>
<protein>
    <recommendedName>
        <fullName>Putative uncharacterized protein YhiL</fullName>
    </recommendedName>
</protein>
<name>YHIL_ECOLI</name>
<organism>
    <name type="scientific">Escherichia coli (strain K12)</name>
    <dbReference type="NCBI Taxonomy" id="83333"/>
    <lineage>
        <taxon>Bacteria</taxon>
        <taxon>Pseudomonadati</taxon>
        <taxon>Pseudomonadota</taxon>
        <taxon>Gammaproteobacteria</taxon>
        <taxon>Enterobacterales</taxon>
        <taxon>Enterobacteriaceae</taxon>
        <taxon>Escherichia</taxon>
    </lineage>
</organism>
<feature type="chain" id="PRO_0000169563" description="Putative uncharacterized protein YhiL">
    <location>
        <begin position="1"/>
        <end position="535"/>
    </location>
</feature>
<feature type="region of interest" description="Disordered" evidence="1">
    <location>
        <begin position="1"/>
        <end position="34"/>
    </location>
</feature>
<feature type="compositionally biased region" description="Basic and acidic residues" evidence="1">
    <location>
        <begin position="15"/>
        <end position="34"/>
    </location>
</feature>
<reference key="1">
    <citation type="journal article" date="1994" name="Nucleic Acids Res.">
        <title>Analysis of the Escherichia coli genome. V. DNA sequence of the region from 76.0 to 81.5 minutes.</title>
        <authorList>
            <person name="Sofia H.J."/>
            <person name="Burland V."/>
            <person name="Daniels D.L."/>
            <person name="Plunkett G. III"/>
            <person name="Blattner F.R."/>
        </authorList>
    </citation>
    <scope>NUCLEOTIDE SEQUENCE [LARGE SCALE GENOMIC DNA]</scope>
    <source>
        <strain>K12 / MG1655 / ATCC 47076</strain>
    </source>
</reference>
<reference key="2">
    <citation type="journal article" date="1997" name="Science">
        <title>The complete genome sequence of Escherichia coli K-12.</title>
        <authorList>
            <person name="Blattner F.R."/>
            <person name="Plunkett G. III"/>
            <person name="Bloch C.A."/>
            <person name="Perna N.T."/>
            <person name="Burland V."/>
            <person name="Riley M."/>
            <person name="Collado-Vides J."/>
            <person name="Glasner J.D."/>
            <person name="Rode C.K."/>
            <person name="Mayhew G.F."/>
            <person name="Gregor J."/>
            <person name="Davis N.W."/>
            <person name="Kirkpatrick H.A."/>
            <person name="Goeden M.A."/>
            <person name="Rose D.J."/>
            <person name="Mau B."/>
            <person name="Shao Y."/>
        </authorList>
    </citation>
    <scope>NUCLEOTIDE SEQUENCE [LARGE SCALE GENOMIC DNA]</scope>
    <scope>SEQUENCE REVISION</scope>
    <source>
        <strain>K12 / MG1655 / ATCC 47076</strain>
    </source>
</reference>
<reference key="3">
    <citation type="journal article" date="2006" name="Mol. Syst. Biol.">
        <title>Highly accurate genome sequences of Escherichia coli K-12 strains MG1655 and W3110.</title>
        <authorList>
            <person name="Hayashi K."/>
            <person name="Morooka N."/>
            <person name="Yamamoto Y."/>
            <person name="Fujita K."/>
            <person name="Isono K."/>
            <person name="Choi S."/>
            <person name="Ohtsubo E."/>
            <person name="Baba T."/>
            <person name="Wanner B.L."/>
            <person name="Mori H."/>
            <person name="Horiuchi T."/>
        </authorList>
    </citation>
    <scope>NUCLEOTIDE SEQUENCE [LARGE SCALE GENOMIC DNA]</scope>
    <source>
        <strain>K12 / W3110 / ATCC 27325 / DSM 5911</strain>
    </source>
</reference>
<proteinExistence type="uncertain"/>
<keyword id="KW-1185">Reference proteome</keyword>